<proteinExistence type="inferred from homology"/>
<dbReference type="EC" id="1.1.1.262" evidence="1"/>
<dbReference type="EMBL" id="BX936398">
    <property type="protein sequence ID" value="CAH19874.1"/>
    <property type="molecule type" value="Genomic_DNA"/>
</dbReference>
<dbReference type="RefSeq" id="WP_011191711.1">
    <property type="nucleotide sequence ID" value="NC_006155.1"/>
</dbReference>
<dbReference type="SMR" id="Q3V7Q4"/>
<dbReference type="GeneID" id="49787363"/>
<dbReference type="KEGG" id="ypo:BZ17_1923"/>
<dbReference type="KEGG" id="yps:YPTB0634"/>
<dbReference type="PATRIC" id="fig|273123.14.peg.2043"/>
<dbReference type="UniPathway" id="UPA00244">
    <property type="reaction ID" value="UER00312"/>
</dbReference>
<dbReference type="Proteomes" id="UP000001011">
    <property type="component" value="Chromosome"/>
</dbReference>
<dbReference type="GO" id="GO:0005737">
    <property type="term" value="C:cytoplasm"/>
    <property type="evidence" value="ECO:0007669"/>
    <property type="project" value="UniProtKB-SubCell"/>
</dbReference>
<dbReference type="GO" id="GO:0050570">
    <property type="term" value="F:4-hydroxythreonine-4-phosphate dehydrogenase activity"/>
    <property type="evidence" value="ECO:0007669"/>
    <property type="project" value="UniProtKB-UniRule"/>
</dbReference>
<dbReference type="GO" id="GO:0050897">
    <property type="term" value="F:cobalt ion binding"/>
    <property type="evidence" value="ECO:0007669"/>
    <property type="project" value="UniProtKB-UniRule"/>
</dbReference>
<dbReference type="GO" id="GO:0000287">
    <property type="term" value="F:magnesium ion binding"/>
    <property type="evidence" value="ECO:0007669"/>
    <property type="project" value="UniProtKB-UniRule"/>
</dbReference>
<dbReference type="GO" id="GO:0051287">
    <property type="term" value="F:NAD binding"/>
    <property type="evidence" value="ECO:0007669"/>
    <property type="project" value="InterPro"/>
</dbReference>
<dbReference type="GO" id="GO:0008270">
    <property type="term" value="F:zinc ion binding"/>
    <property type="evidence" value="ECO:0007669"/>
    <property type="project" value="UniProtKB-UniRule"/>
</dbReference>
<dbReference type="GO" id="GO:0042823">
    <property type="term" value="P:pyridoxal phosphate biosynthetic process"/>
    <property type="evidence" value="ECO:0007669"/>
    <property type="project" value="UniProtKB-UniRule"/>
</dbReference>
<dbReference type="GO" id="GO:0008615">
    <property type="term" value="P:pyridoxine biosynthetic process"/>
    <property type="evidence" value="ECO:0007669"/>
    <property type="project" value="UniProtKB-UniRule"/>
</dbReference>
<dbReference type="Gene3D" id="3.40.718.10">
    <property type="entry name" value="Isopropylmalate Dehydrogenase"/>
    <property type="match status" value="1"/>
</dbReference>
<dbReference type="HAMAP" id="MF_00536">
    <property type="entry name" value="PdxA"/>
    <property type="match status" value="1"/>
</dbReference>
<dbReference type="InterPro" id="IPR037510">
    <property type="entry name" value="PdxA"/>
</dbReference>
<dbReference type="InterPro" id="IPR005255">
    <property type="entry name" value="PdxA_fam"/>
</dbReference>
<dbReference type="NCBIfam" id="TIGR00557">
    <property type="entry name" value="pdxA"/>
    <property type="match status" value="1"/>
</dbReference>
<dbReference type="PANTHER" id="PTHR30004">
    <property type="entry name" value="4-HYDROXYTHREONINE-4-PHOSPHATE DEHYDROGENASE"/>
    <property type="match status" value="1"/>
</dbReference>
<dbReference type="PANTHER" id="PTHR30004:SF5">
    <property type="entry name" value="4-HYDROXYTHREONINE-4-PHOSPHATE DEHYDROGENASE"/>
    <property type="match status" value="1"/>
</dbReference>
<dbReference type="Pfam" id="PF04166">
    <property type="entry name" value="PdxA"/>
    <property type="match status" value="1"/>
</dbReference>
<dbReference type="SUPFAM" id="SSF53659">
    <property type="entry name" value="Isocitrate/Isopropylmalate dehydrogenase-like"/>
    <property type="match status" value="1"/>
</dbReference>
<name>PDXA_YERPS</name>
<evidence type="ECO:0000255" key="1">
    <source>
        <dbReference type="HAMAP-Rule" id="MF_00536"/>
    </source>
</evidence>
<accession>Q3V7Q4</accession>
<gene>
    <name evidence="1" type="primary">pdxA</name>
    <name type="ordered locus">YPTB0634</name>
</gene>
<keyword id="KW-0170">Cobalt</keyword>
<keyword id="KW-0963">Cytoplasm</keyword>
<keyword id="KW-0460">Magnesium</keyword>
<keyword id="KW-0479">Metal-binding</keyword>
<keyword id="KW-0520">NAD</keyword>
<keyword id="KW-0521">NADP</keyword>
<keyword id="KW-0560">Oxidoreductase</keyword>
<keyword id="KW-0664">Pyridoxine biosynthesis</keyword>
<keyword id="KW-0862">Zinc</keyword>
<feature type="chain" id="PRO_1000061037" description="4-hydroxythreonine-4-phosphate dehydrogenase">
    <location>
        <begin position="1"/>
        <end position="331"/>
    </location>
</feature>
<feature type="binding site" evidence="1">
    <location>
        <position position="137"/>
    </location>
    <ligand>
        <name>substrate</name>
    </ligand>
</feature>
<feature type="binding site" evidence="1">
    <location>
        <position position="138"/>
    </location>
    <ligand>
        <name>substrate</name>
    </ligand>
</feature>
<feature type="binding site" evidence="1">
    <location>
        <position position="167"/>
    </location>
    <ligand>
        <name>a divalent metal cation</name>
        <dbReference type="ChEBI" id="CHEBI:60240"/>
        <note>ligand shared between dimeric partners</note>
    </ligand>
</feature>
<feature type="binding site" evidence="1">
    <location>
        <position position="212"/>
    </location>
    <ligand>
        <name>a divalent metal cation</name>
        <dbReference type="ChEBI" id="CHEBI:60240"/>
        <note>ligand shared between dimeric partners</note>
    </ligand>
</feature>
<feature type="binding site" evidence="1">
    <location>
        <position position="267"/>
    </location>
    <ligand>
        <name>a divalent metal cation</name>
        <dbReference type="ChEBI" id="CHEBI:60240"/>
        <note>ligand shared between dimeric partners</note>
    </ligand>
</feature>
<feature type="binding site" evidence="1">
    <location>
        <position position="275"/>
    </location>
    <ligand>
        <name>substrate</name>
    </ligand>
</feature>
<feature type="binding site" evidence="1">
    <location>
        <position position="284"/>
    </location>
    <ligand>
        <name>substrate</name>
    </ligand>
</feature>
<feature type="binding site" evidence="1">
    <location>
        <position position="293"/>
    </location>
    <ligand>
        <name>substrate</name>
    </ligand>
</feature>
<comment type="function">
    <text evidence="1">Catalyzes the NAD(P)-dependent oxidation of 4-(phosphooxy)-L-threonine (HTP) into 2-amino-3-oxo-4-(phosphooxy)butyric acid which spontaneously decarboxylates to form 3-amino-2-oxopropyl phosphate (AHAP).</text>
</comment>
<comment type="catalytic activity">
    <reaction evidence="1">
        <text>4-(phosphooxy)-L-threonine + NAD(+) = 3-amino-2-oxopropyl phosphate + CO2 + NADH</text>
        <dbReference type="Rhea" id="RHEA:32275"/>
        <dbReference type="ChEBI" id="CHEBI:16526"/>
        <dbReference type="ChEBI" id="CHEBI:57279"/>
        <dbReference type="ChEBI" id="CHEBI:57540"/>
        <dbReference type="ChEBI" id="CHEBI:57945"/>
        <dbReference type="ChEBI" id="CHEBI:58452"/>
        <dbReference type="EC" id="1.1.1.262"/>
    </reaction>
</comment>
<comment type="cofactor">
    <cofactor evidence="1">
        <name>Zn(2+)</name>
        <dbReference type="ChEBI" id="CHEBI:29105"/>
    </cofactor>
    <cofactor evidence="1">
        <name>Mg(2+)</name>
        <dbReference type="ChEBI" id="CHEBI:18420"/>
    </cofactor>
    <cofactor evidence="1">
        <name>Co(2+)</name>
        <dbReference type="ChEBI" id="CHEBI:48828"/>
    </cofactor>
    <text evidence="1">Binds 1 divalent metal cation per subunit. Can use ions such as Zn(2+), Mg(2+) or Co(2+).</text>
</comment>
<comment type="pathway">
    <text evidence="1">Cofactor biosynthesis; pyridoxine 5'-phosphate biosynthesis; pyridoxine 5'-phosphate from D-erythrose 4-phosphate: step 4/5.</text>
</comment>
<comment type="subunit">
    <text evidence="1">Homodimer.</text>
</comment>
<comment type="subcellular location">
    <subcellularLocation>
        <location evidence="1">Cytoplasm</location>
    </subcellularLocation>
</comment>
<comment type="miscellaneous">
    <text evidence="1">The active site is located at the dimer interface.</text>
</comment>
<comment type="similarity">
    <text evidence="1">Belongs to the PdxA family.</text>
</comment>
<protein>
    <recommendedName>
        <fullName evidence="1">4-hydroxythreonine-4-phosphate dehydrogenase</fullName>
        <ecNumber evidence="1">1.1.1.262</ecNumber>
    </recommendedName>
    <alternativeName>
        <fullName evidence="1">4-(phosphohydroxy)-L-threonine dehydrogenase</fullName>
    </alternativeName>
</protein>
<reference key="1">
    <citation type="journal article" date="2004" name="Proc. Natl. Acad. Sci. U.S.A.">
        <title>Insights into the evolution of Yersinia pestis through whole-genome comparison with Yersinia pseudotuberculosis.</title>
        <authorList>
            <person name="Chain P.S.G."/>
            <person name="Carniel E."/>
            <person name="Larimer F.W."/>
            <person name="Lamerdin J."/>
            <person name="Stoutland P.O."/>
            <person name="Regala W.M."/>
            <person name="Georgescu A.M."/>
            <person name="Vergez L.M."/>
            <person name="Land M.L."/>
            <person name="Motin V.L."/>
            <person name="Brubaker R.R."/>
            <person name="Fowler J."/>
            <person name="Hinnebusch J."/>
            <person name="Marceau M."/>
            <person name="Medigue C."/>
            <person name="Simonet M."/>
            <person name="Chenal-Francisque V."/>
            <person name="Souza B."/>
            <person name="Dacheux D."/>
            <person name="Elliott J.M."/>
            <person name="Derbise A."/>
            <person name="Hauser L.J."/>
            <person name="Garcia E."/>
        </authorList>
    </citation>
    <scope>NUCLEOTIDE SEQUENCE [LARGE SCALE GENOMIC DNA]</scope>
    <source>
        <strain>IP32953</strain>
    </source>
</reference>
<organism>
    <name type="scientific">Yersinia pseudotuberculosis serotype I (strain IP32953)</name>
    <dbReference type="NCBI Taxonomy" id="273123"/>
    <lineage>
        <taxon>Bacteria</taxon>
        <taxon>Pseudomonadati</taxon>
        <taxon>Pseudomonadota</taxon>
        <taxon>Gammaproteobacteria</taxon>
        <taxon>Enterobacterales</taxon>
        <taxon>Yersiniaceae</taxon>
        <taxon>Yersinia</taxon>
    </lineage>
</organism>
<sequence>MHNHNNRLVITPGEPAGVGPDLAIALAQQDWPVELVVCADPALLLARASQLNLPLQLREYQADQPAIAQQAGSLTILPVKTAVNVVPGKLDVGNSHYVVETLAKACDGAISGEFAALVTGPVQKSIINDAGIPFIGHTEFFADRSHCQRVVMMLATEELRVALATTHLPLLAVPGAITQASLHEVITILDNDLKTKFGITQPQIYVCGLNPHAGEGGHMGHEEIDTIIPALNTLRQQGINLIGPLPADTLFQPKYLQHADAVLAMYHDQGLPVLKYQGFGRAVNITLGLPFIRTSVDHGTALELAATGTADVGSFITALNLAIKMINNSNE</sequence>